<dbReference type="EC" id="6.2.1.3"/>
<dbReference type="EMBL" id="Z75208">
    <property type="protein sequence ID" value="CAA99571.1"/>
    <property type="molecule type" value="Genomic_DNA"/>
</dbReference>
<dbReference type="EMBL" id="AL009126">
    <property type="protein sequence ID" value="CAB14816.1"/>
    <property type="molecule type" value="Genomic_DNA"/>
</dbReference>
<dbReference type="PIR" id="D69649">
    <property type="entry name" value="D69649"/>
</dbReference>
<dbReference type="RefSeq" id="NP_390734.1">
    <property type="nucleotide sequence ID" value="NC_000964.3"/>
</dbReference>
<dbReference type="RefSeq" id="WP_004399166.1">
    <property type="nucleotide sequence ID" value="NZ_OZ025638.1"/>
</dbReference>
<dbReference type="SMR" id="P94547"/>
<dbReference type="FunCoup" id="P94547">
    <property type="interactions" value="457"/>
</dbReference>
<dbReference type="STRING" id="224308.BSU28560"/>
<dbReference type="PaxDb" id="224308-BSU28560"/>
<dbReference type="EnsemblBacteria" id="CAB14816">
    <property type="protein sequence ID" value="CAB14816"/>
    <property type="gene ID" value="BSU_28560"/>
</dbReference>
<dbReference type="GeneID" id="936505"/>
<dbReference type="KEGG" id="bsu:BSU28560"/>
<dbReference type="PATRIC" id="fig|224308.179.peg.3103"/>
<dbReference type="eggNOG" id="COG0318">
    <property type="taxonomic scope" value="Bacteria"/>
</dbReference>
<dbReference type="InParanoid" id="P94547"/>
<dbReference type="OrthoDB" id="9803968at2"/>
<dbReference type="PhylomeDB" id="P94547"/>
<dbReference type="BioCyc" id="BSUB:BSU28560-MONOMER"/>
<dbReference type="Proteomes" id="UP000001570">
    <property type="component" value="Chromosome"/>
</dbReference>
<dbReference type="GO" id="GO:0005524">
    <property type="term" value="F:ATP binding"/>
    <property type="evidence" value="ECO:0007669"/>
    <property type="project" value="UniProtKB-KW"/>
</dbReference>
<dbReference type="GO" id="GO:0004467">
    <property type="term" value="F:long-chain fatty acid-CoA ligase activity"/>
    <property type="evidence" value="ECO:0007669"/>
    <property type="project" value="UniProtKB-EC"/>
</dbReference>
<dbReference type="CDD" id="cd05936">
    <property type="entry name" value="FC-FACS_FadD_like"/>
    <property type="match status" value="1"/>
</dbReference>
<dbReference type="FunFam" id="3.30.300.30:FF:000008">
    <property type="entry name" value="2,3-dihydroxybenzoate-AMP ligase"/>
    <property type="match status" value="1"/>
</dbReference>
<dbReference type="FunFam" id="3.40.50.12780:FF:000003">
    <property type="entry name" value="Long-chain-fatty-acid--CoA ligase FadD"/>
    <property type="match status" value="1"/>
</dbReference>
<dbReference type="Gene3D" id="3.30.300.30">
    <property type="match status" value="1"/>
</dbReference>
<dbReference type="Gene3D" id="3.40.50.980">
    <property type="match status" value="2"/>
</dbReference>
<dbReference type="Gene3D" id="2.30.38.10">
    <property type="entry name" value="Luciferase, Domain 3"/>
    <property type="match status" value="1"/>
</dbReference>
<dbReference type="InterPro" id="IPR025110">
    <property type="entry name" value="AMP-bd_C"/>
</dbReference>
<dbReference type="InterPro" id="IPR045851">
    <property type="entry name" value="AMP-bd_C_sf"/>
</dbReference>
<dbReference type="InterPro" id="IPR020845">
    <property type="entry name" value="AMP-binding_CS"/>
</dbReference>
<dbReference type="InterPro" id="IPR000873">
    <property type="entry name" value="AMP-dep_synth/lig_dom"/>
</dbReference>
<dbReference type="InterPro" id="IPR050237">
    <property type="entry name" value="ATP-dep_AMP-bd_enzyme"/>
</dbReference>
<dbReference type="PANTHER" id="PTHR43767">
    <property type="entry name" value="LONG-CHAIN-FATTY-ACID--COA LIGASE"/>
    <property type="match status" value="1"/>
</dbReference>
<dbReference type="PANTHER" id="PTHR43767:SF9">
    <property type="entry name" value="LONG-CHAIN-FATTY-ACID--COA LIGASE"/>
    <property type="match status" value="1"/>
</dbReference>
<dbReference type="Pfam" id="PF00501">
    <property type="entry name" value="AMP-binding"/>
    <property type="match status" value="1"/>
</dbReference>
<dbReference type="Pfam" id="PF13193">
    <property type="entry name" value="AMP-binding_C"/>
    <property type="match status" value="1"/>
</dbReference>
<dbReference type="SUPFAM" id="SSF56801">
    <property type="entry name" value="Acetyl-CoA synthetase-like"/>
    <property type="match status" value="1"/>
</dbReference>
<dbReference type="PROSITE" id="PS00455">
    <property type="entry name" value="AMP_BINDING"/>
    <property type="match status" value="1"/>
</dbReference>
<sequence length="560" mass="62692">MQSQKPWLAEYPNDIPHELPLPNKTLQSILTDSAARFPDKTAISFYGKKLTFHDILTDALKLAAFLQCNGLQKGDRVAVMLPNCPQTVISYYGVLFAGGIVVQTNPLYTEHELEYQLRDAQVSVIITLDLLFPKAIKMKTLSIVDQILITSVKDYLPFPKNILYPLTQKQKVHIDFDKTANIHTFASCMKQEKTELLTIPKIDPEHDIAVLQYTGGTTGAPKGVMLTHQNILANTEMCAAWMYDVKEGAEKVLGIVPFFHVYGLTAVMNYSIKLGFEMILLPKFDPLETLKIIDKHKPTLFPGAPTIYIGLLHHPELQHYDLSSIKSCLSGSAALPVEVKQKFEKVTGGKLVEGYGLSEASPVTHANFIWGKNKPGSIGCPWPSTDAAIYSEETGELAAPYEHGEIIVKGPQVMKGYWNKPEETAAVLRDGWLFTGDMGYMDEEGFFYIADRKKDIIIAGGYNIYPREVEEALYEHEAIQEIVVAGVPDSYRGETVKAFVVLKKGAKADTEELDAFARSRLAPYKVPKAYEFRKELPKTAVGKILRRRLLEEETENHHIK</sequence>
<protein>
    <recommendedName>
        <fullName>Long-chain-fatty-acid--CoA ligase</fullName>
        <ecNumber>6.2.1.3</ecNumber>
    </recommendedName>
    <alternativeName>
        <fullName>Long-chain acyl-CoA synthetase</fullName>
    </alternativeName>
</protein>
<name>LCFA_BACSU</name>
<organism>
    <name type="scientific">Bacillus subtilis (strain 168)</name>
    <dbReference type="NCBI Taxonomy" id="224308"/>
    <lineage>
        <taxon>Bacteria</taxon>
        <taxon>Bacillati</taxon>
        <taxon>Bacillota</taxon>
        <taxon>Bacilli</taxon>
        <taxon>Bacillales</taxon>
        <taxon>Bacillaceae</taxon>
        <taxon>Bacillus</taxon>
    </lineage>
</organism>
<evidence type="ECO:0000305" key="1"/>
<comment type="catalytic activity">
    <reaction>
        <text>a long-chain fatty acid + ATP + CoA = a long-chain fatty acyl-CoA + AMP + diphosphate</text>
        <dbReference type="Rhea" id="RHEA:15421"/>
        <dbReference type="ChEBI" id="CHEBI:30616"/>
        <dbReference type="ChEBI" id="CHEBI:33019"/>
        <dbReference type="ChEBI" id="CHEBI:57287"/>
        <dbReference type="ChEBI" id="CHEBI:57560"/>
        <dbReference type="ChEBI" id="CHEBI:83139"/>
        <dbReference type="ChEBI" id="CHEBI:456215"/>
        <dbReference type="EC" id="6.2.1.3"/>
    </reaction>
</comment>
<comment type="similarity">
    <text evidence="1">Belongs to the ATP-dependent AMP-binding enzyme family.</text>
</comment>
<reference key="1">
    <citation type="journal article" date="1996" name="Microbiology">
        <title>The dnaB-pheA (256 degrees-240 degrees) region of the Bacillus subtilis chromosome containing genes responsible for stress responses, the utilization of plant cell walls and primary metabolism.</title>
        <authorList>
            <person name="Wipat A."/>
            <person name="Carter N."/>
            <person name="Brignell C.S."/>
            <person name="Guy J.B."/>
            <person name="Piper K."/>
            <person name="Sanders J."/>
            <person name="Emmerson P.T."/>
            <person name="Harwood C.R."/>
        </authorList>
    </citation>
    <scope>NUCLEOTIDE SEQUENCE [GENOMIC DNA]</scope>
    <source>
        <strain>168</strain>
    </source>
</reference>
<reference key="2">
    <citation type="journal article" date="1997" name="Nature">
        <title>The complete genome sequence of the Gram-positive bacterium Bacillus subtilis.</title>
        <authorList>
            <person name="Kunst F."/>
            <person name="Ogasawara N."/>
            <person name="Moszer I."/>
            <person name="Albertini A.M."/>
            <person name="Alloni G."/>
            <person name="Azevedo V."/>
            <person name="Bertero M.G."/>
            <person name="Bessieres P."/>
            <person name="Bolotin A."/>
            <person name="Borchert S."/>
            <person name="Borriss R."/>
            <person name="Boursier L."/>
            <person name="Brans A."/>
            <person name="Braun M."/>
            <person name="Brignell S.C."/>
            <person name="Bron S."/>
            <person name="Brouillet S."/>
            <person name="Bruschi C.V."/>
            <person name="Caldwell B."/>
            <person name="Capuano V."/>
            <person name="Carter N.M."/>
            <person name="Choi S.-K."/>
            <person name="Codani J.-J."/>
            <person name="Connerton I.F."/>
            <person name="Cummings N.J."/>
            <person name="Daniel R.A."/>
            <person name="Denizot F."/>
            <person name="Devine K.M."/>
            <person name="Duesterhoeft A."/>
            <person name="Ehrlich S.D."/>
            <person name="Emmerson P.T."/>
            <person name="Entian K.-D."/>
            <person name="Errington J."/>
            <person name="Fabret C."/>
            <person name="Ferrari E."/>
            <person name="Foulger D."/>
            <person name="Fritz C."/>
            <person name="Fujita M."/>
            <person name="Fujita Y."/>
            <person name="Fuma S."/>
            <person name="Galizzi A."/>
            <person name="Galleron N."/>
            <person name="Ghim S.-Y."/>
            <person name="Glaser P."/>
            <person name="Goffeau A."/>
            <person name="Golightly E.J."/>
            <person name="Grandi G."/>
            <person name="Guiseppi G."/>
            <person name="Guy B.J."/>
            <person name="Haga K."/>
            <person name="Haiech J."/>
            <person name="Harwood C.R."/>
            <person name="Henaut A."/>
            <person name="Hilbert H."/>
            <person name="Holsappel S."/>
            <person name="Hosono S."/>
            <person name="Hullo M.-F."/>
            <person name="Itaya M."/>
            <person name="Jones L.-M."/>
            <person name="Joris B."/>
            <person name="Karamata D."/>
            <person name="Kasahara Y."/>
            <person name="Klaerr-Blanchard M."/>
            <person name="Klein C."/>
            <person name="Kobayashi Y."/>
            <person name="Koetter P."/>
            <person name="Koningstein G."/>
            <person name="Krogh S."/>
            <person name="Kumano M."/>
            <person name="Kurita K."/>
            <person name="Lapidus A."/>
            <person name="Lardinois S."/>
            <person name="Lauber J."/>
            <person name="Lazarevic V."/>
            <person name="Lee S.-M."/>
            <person name="Levine A."/>
            <person name="Liu H."/>
            <person name="Masuda S."/>
            <person name="Mauel C."/>
            <person name="Medigue C."/>
            <person name="Medina N."/>
            <person name="Mellado R.P."/>
            <person name="Mizuno M."/>
            <person name="Moestl D."/>
            <person name="Nakai S."/>
            <person name="Noback M."/>
            <person name="Noone D."/>
            <person name="O'Reilly M."/>
            <person name="Ogawa K."/>
            <person name="Ogiwara A."/>
            <person name="Oudega B."/>
            <person name="Park S.-H."/>
            <person name="Parro V."/>
            <person name="Pohl T.M."/>
            <person name="Portetelle D."/>
            <person name="Porwollik S."/>
            <person name="Prescott A.M."/>
            <person name="Presecan E."/>
            <person name="Pujic P."/>
            <person name="Purnelle B."/>
            <person name="Rapoport G."/>
            <person name="Rey M."/>
            <person name="Reynolds S."/>
            <person name="Rieger M."/>
            <person name="Rivolta C."/>
            <person name="Rocha E."/>
            <person name="Roche B."/>
            <person name="Rose M."/>
            <person name="Sadaie Y."/>
            <person name="Sato T."/>
            <person name="Scanlan E."/>
            <person name="Schleich S."/>
            <person name="Schroeter R."/>
            <person name="Scoffone F."/>
            <person name="Sekiguchi J."/>
            <person name="Sekowska A."/>
            <person name="Seror S.J."/>
            <person name="Serror P."/>
            <person name="Shin B.-S."/>
            <person name="Soldo B."/>
            <person name="Sorokin A."/>
            <person name="Tacconi E."/>
            <person name="Takagi T."/>
            <person name="Takahashi H."/>
            <person name="Takemaru K."/>
            <person name="Takeuchi M."/>
            <person name="Tamakoshi A."/>
            <person name="Tanaka T."/>
            <person name="Terpstra P."/>
            <person name="Tognoni A."/>
            <person name="Tosato V."/>
            <person name="Uchiyama S."/>
            <person name="Vandenbol M."/>
            <person name="Vannier F."/>
            <person name="Vassarotti A."/>
            <person name="Viari A."/>
            <person name="Wambutt R."/>
            <person name="Wedler E."/>
            <person name="Wedler H."/>
            <person name="Weitzenegger T."/>
            <person name="Winters P."/>
            <person name="Wipat A."/>
            <person name="Yamamoto H."/>
            <person name="Yamane K."/>
            <person name="Yasumoto K."/>
            <person name="Yata K."/>
            <person name="Yoshida K."/>
            <person name="Yoshikawa H.-F."/>
            <person name="Zumstein E."/>
            <person name="Yoshikawa H."/>
            <person name="Danchin A."/>
        </authorList>
    </citation>
    <scope>NUCLEOTIDE SEQUENCE [LARGE SCALE GENOMIC DNA]</scope>
    <source>
        <strain>168</strain>
    </source>
</reference>
<gene>
    <name type="primary">lcfA</name>
    <name type="ordered locus">BSU28560</name>
</gene>
<feature type="chain" id="PRO_0000193124" description="Long-chain-fatty-acid--CoA ligase">
    <location>
        <begin position="1"/>
        <end position="560"/>
    </location>
</feature>
<accession>P94547</accession>
<proteinExistence type="inferred from homology"/>
<keyword id="KW-0067">ATP-binding</keyword>
<keyword id="KW-0276">Fatty acid metabolism</keyword>
<keyword id="KW-0436">Ligase</keyword>
<keyword id="KW-0443">Lipid metabolism</keyword>
<keyword id="KW-0547">Nucleotide-binding</keyword>
<keyword id="KW-1185">Reference proteome</keyword>